<evidence type="ECO:0000255" key="1">
    <source>
        <dbReference type="PROSITE-ProRule" id="PRU00723"/>
    </source>
</evidence>
<keyword id="KW-0238">DNA-binding</keyword>
<keyword id="KW-0479">Metal-binding</keyword>
<keyword id="KW-1185">Reference proteome</keyword>
<keyword id="KW-0677">Repeat</keyword>
<keyword id="KW-0862">Zinc</keyword>
<keyword id="KW-0863">Zinc-finger</keyword>
<sequence length="82" mass="9451">MSEEKFPERPGEPECSYYLRTGNCYLKQNCKYHHPKNITPSEPQCTLNDKGLPLRPGQAICPHYSRFGICRSGPTCKFDHFT</sequence>
<name>C3H13_ARATH</name>
<dbReference type="EMBL" id="AC023673">
    <property type="status" value="NOT_ANNOTATED_CDS"/>
    <property type="molecule type" value="Genomic_DNA"/>
</dbReference>
<dbReference type="EMBL" id="CP002684">
    <property type="protein sequence ID" value="AEE32262.1"/>
    <property type="molecule type" value="Genomic_DNA"/>
</dbReference>
<dbReference type="EMBL" id="BX818039">
    <property type="status" value="NOT_ANNOTATED_CDS"/>
    <property type="molecule type" value="mRNA"/>
</dbReference>
<dbReference type="RefSeq" id="NP_973988.1">
    <property type="nucleotide sequence ID" value="NM_202259.1"/>
</dbReference>
<dbReference type="BioGRID" id="30424">
    <property type="interactions" value="15"/>
</dbReference>
<dbReference type="IntAct" id="Q3ECU8">
    <property type="interactions" value="15"/>
</dbReference>
<dbReference type="STRING" id="3702.Q3ECU8"/>
<dbReference type="PaxDb" id="3702-AT1G48195.1"/>
<dbReference type="EnsemblPlants" id="AT1G48195.1">
    <property type="protein sequence ID" value="AT1G48195.1"/>
    <property type="gene ID" value="AT1G48195"/>
</dbReference>
<dbReference type="GeneID" id="2745816"/>
<dbReference type="Gramene" id="AT1G48195.1">
    <property type="protein sequence ID" value="AT1G48195.1"/>
    <property type="gene ID" value="AT1G48195"/>
</dbReference>
<dbReference type="KEGG" id="ath:AT1G48195"/>
<dbReference type="Araport" id="AT1G48195"/>
<dbReference type="TAIR" id="AT1G48195"/>
<dbReference type="eggNOG" id="KOG1677">
    <property type="taxonomic scope" value="Eukaryota"/>
</dbReference>
<dbReference type="HOGENOM" id="CLU_2561385_0_0_1"/>
<dbReference type="InParanoid" id="Q3ECU8"/>
<dbReference type="OMA" id="AICPHYS"/>
<dbReference type="PhylomeDB" id="Q3ECU8"/>
<dbReference type="PRO" id="PR:Q3ECU8"/>
<dbReference type="Proteomes" id="UP000006548">
    <property type="component" value="Chromosome 1"/>
</dbReference>
<dbReference type="ExpressionAtlas" id="Q3ECU8">
    <property type="expression patterns" value="baseline and differential"/>
</dbReference>
<dbReference type="GO" id="GO:0003677">
    <property type="term" value="F:DNA binding"/>
    <property type="evidence" value="ECO:0007669"/>
    <property type="project" value="UniProtKB-KW"/>
</dbReference>
<dbReference type="GO" id="GO:0003729">
    <property type="term" value="F:mRNA binding"/>
    <property type="evidence" value="ECO:0007669"/>
    <property type="project" value="UniProtKB-ARBA"/>
</dbReference>
<dbReference type="GO" id="GO:0008270">
    <property type="term" value="F:zinc ion binding"/>
    <property type="evidence" value="ECO:0007669"/>
    <property type="project" value="UniProtKB-KW"/>
</dbReference>
<dbReference type="Gene3D" id="3.30.1370.210">
    <property type="match status" value="1"/>
</dbReference>
<dbReference type="InterPro" id="IPR050974">
    <property type="entry name" value="Plant_ZF_CCCH"/>
</dbReference>
<dbReference type="InterPro" id="IPR000571">
    <property type="entry name" value="Znf_CCCH"/>
</dbReference>
<dbReference type="InterPro" id="IPR036855">
    <property type="entry name" value="Znf_CCCH_sf"/>
</dbReference>
<dbReference type="PANTHER" id="PTHR12506">
    <property type="entry name" value="PROTEIN PHOSPHATASE RELATED"/>
    <property type="match status" value="1"/>
</dbReference>
<dbReference type="PANTHER" id="PTHR12506:SF20">
    <property type="entry name" value="ZINC FINGER CCCH DOMAIN-CONTAINING PROTEIN 67"/>
    <property type="match status" value="1"/>
</dbReference>
<dbReference type="Pfam" id="PF00642">
    <property type="entry name" value="zf-CCCH"/>
    <property type="match status" value="1"/>
</dbReference>
<dbReference type="SMART" id="SM00356">
    <property type="entry name" value="ZnF_C3H1"/>
    <property type="match status" value="2"/>
</dbReference>
<dbReference type="SUPFAM" id="SSF90229">
    <property type="entry name" value="CCCH zinc finger"/>
    <property type="match status" value="2"/>
</dbReference>
<dbReference type="PROSITE" id="PS50103">
    <property type="entry name" value="ZF_C3H1"/>
    <property type="match status" value="2"/>
</dbReference>
<protein>
    <recommendedName>
        <fullName>Zinc finger CCCH domain-containing protein 13</fullName>
        <shortName>AtC3H13</shortName>
    </recommendedName>
</protein>
<accession>Q3ECU8</accession>
<organism>
    <name type="scientific">Arabidopsis thaliana</name>
    <name type="common">Mouse-ear cress</name>
    <dbReference type="NCBI Taxonomy" id="3702"/>
    <lineage>
        <taxon>Eukaryota</taxon>
        <taxon>Viridiplantae</taxon>
        <taxon>Streptophyta</taxon>
        <taxon>Embryophyta</taxon>
        <taxon>Tracheophyta</taxon>
        <taxon>Spermatophyta</taxon>
        <taxon>Magnoliopsida</taxon>
        <taxon>eudicotyledons</taxon>
        <taxon>Gunneridae</taxon>
        <taxon>Pentapetalae</taxon>
        <taxon>rosids</taxon>
        <taxon>malvids</taxon>
        <taxon>Brassicales</taxon>
        <taxon>Brassicaceae</taxon>
        <taxon>Camelineae</taxon>
        <taxon>Arabidopsis</taxon>
    </lineage>
</organism>
<gene>
    <name type="ordered locus">At1g48195</name>
    <name type="ORF">F21D18</name>
</gene>
<feature type="chain" id="PRO_0000371972" description="Zinc finger CCCH domain-containing protein 13">
    <location>
        <begin position="1"/>
        <end position="82"/>
    </location>
</feature>
<feature type="zinc finger region" description="C3H1-type 1" evidence="1">
    <location>
        <begin position="9"/>
        <end position="37"/>
    </location>
</feature>
<feature type="zinc finger region" description="C3H1-type 2" evidence="1">
    <location>
        <begin position="55"/>
        <end position="82"/>
    </location>
</feature>
<reference key="1">
    <citation type="journal article" date="2000" name="Nature">
        <title>Sequence and analysis of chromosome 1 of the plant Arabidopsis thaliana.</title>
        <authorList>
            <person name="Theologis A."/>
            <person name="Ecker J.R."/>
            <person name="Palm C.J."/>
            <person name="Federspiel N.A."/>
            <person name="Kaul S."/>
            <person name="White O."/>
            <person name="Alonso J."/>
            <person name="Altafi H."/>
            <person name="Araujo R."/>
            <person name="Bowman C.L."/>
            <person name="Brooks S.Y."/>
            <person name="Buehler E."/>
            <person name="Chan A."/>
            <person name="Chao Q."/>
            <person name="Chen H."/>
            <person name="Cheuk R.F."/>
            <person name="Chin C.W."/>
            <person name="Chung M.K."/>
            <person name="Conn L."/>
            <person name="Conway A.B."/>
            <person name="Conway A.R."/>
            <person name="Creasy T.H."/>
            <person name="Dewar K."/>
            <person name="Dunn P."/>
            <person name="Etgu P."/>
            <person name="Feldblyum T.V."/>
            <person name="Feng J.-D."/>
            <person name="Fong B."/>
            <person name="Fujii C.Y."/>
            <person name="Gill J.E."/>
            <person name="Goldsmith A.D."/>
            <person name="Haas B."/>
            <person name="Hansen N.F."/>
            <person name="Hughes B."/>
            <person name="Huizar L."/>
            <person name="Hunter J.L."/>
            <person name="Jenkins J."/>
            <person name="Johnson-Hopson C."/>
            <person name="Khan S."/>
            <person name="Khaykin E."/>
            <person name="Kim C.J."/>
            <person name="Koo H.L."/>
            <person name="Kremenetskaia I."/>
            <person name="Kurtz D.B."/>
            <person name="Kwan A."/>
            <person name="Lam B."/>
            <person name="Langin-Hooper S."/>
            <person name="Lee A."/>
            <person name="Lee J.M."/>
            <person name="Lenz C.A."/>
            <person name="Li J.H."/>
            <person name="Li Y.-P."/>
            <person name="Lin X."/>
            <person name="Liu S.X."/>
            <person name="Liu Z.A."/>
            <person name="Luros J.S."/>
            <person name="Maiti R."/>
            <person name="Marziali A."/>
            <person name="Militscher J."/>
            <person name="Miranda M."/>
            <person name="Nguyen M."/>
            <person name="Nierman W.C."/>
            <person name="Osborne B.I."/>
            <person name="Pai G."/>
            <person name="Peterson J."/>
            <person name="Pham P.K."/>
            <person name="Rizzo M."/>
            <person name="Rooney T."/>
            <person name="Rowley D."/>
            <person name="Sakano H."/>
            <person name="Salzberg S.L."/>
            <person name="Schwartz J.R."/>
            <person name="Shinn P."/>
            <person name="Southwick A.M."/>
            <person name="Sun H."/>
            <person name="Tallon L.J."/>
            <person name="Tambunga G."/>
            <person name="Toriumi M.J."/>
            <person name="Town C.D."/>
            <person name="Utterback T."/>
            <person name="Van Aken S."/>
            <person name="Vaysberg M."/>
            <person name="Vysotskaia V.S."/>
            <person name="Walker M."/>
            <person name="Wu D."/>
            <person name="Yu G."/>
            <person name="Fraser C.M."/>
            <person name="Venter J.C."/>
            <person name="Davis R.W."/>
        </authorList>
    </citation>
    <scope>NUCLEOTIDE SEQUENCE [LARGE SCALE GENOMIC DNA]</scope>
    <source>
        <strain>cv. Columbia</strain>
    </source>
</reference>
<reference key="2">
    <citation type="journal article" date="2017" name="Plant J.">
        <title>Araport11: a complete reannotation of the Arabidopsis thaliana reference genome.</title>
        <authorList>
            <person name="Cheng C.Y."/>
            <person name="Krishnakumar V."/>
            <person name="Chan A.P."/>
            <person name="Thibaud-Nissen F."/>
            <person name="Schobel S."/>
            <person name="Town C.D."/>
        </authorList>
    </citation>
    <scope>GENOME REANNOTATION</scope>
    <source>
        <strain>cv. Columbia</strain>
    </source>
</reference>
<reference key="3">
    <citation type="journal article" date="2004" name="Genome Res.">
        <title>Whole genome sequence comparisons and 'full-length' cDNA sequences: a combined approach to evaluate and improve Arabidopsis genome annotation.</title>
        <authorList>
            <person name="Castelli V."/>
            <person name="Aury J.-M."/>
            <person name="Jaillon O."/>
            <person name="Wincker P."/>
            <person name="Clepet C."/>
            <person name="Menard M."/>
            <person name="Cruaud C."/>
            <person name="Quetier F."/>
            <person name="Scarpelli C."/>
            <person name="Schaechter V."/>
            <person name="Temple G."/>
            <person name="Caboche M."/>
            <person name="Weissenbach J."/>
            <person name="Salanoubat M."/>
        </authorList>
    </citation>
    <scope>NUCLEOTIDE SEQUENCE [LARGE SCALE MRNA]</scope>
    <source>
        <strain>cv. Columbia</strain>
    </source>
</reference>
<reference key="4">
    <citation type="journal article" date="2008" name="BMC Genomics">
        <title>Genome-wide analysis of CCCH zinc finger family in Arabidopsis and rice.</title>
        <authorList>
            <person name="Wang D."/>
            <person name="Guo Y."/>
            <person name="Wu C."/>
            <person name="Yang G."/>
            <person name="Li Y."/>
            <person name="Zheng C."/>
        </authorList>
    </citation>
    <scope>NOMENCLATURE</scope>
</reference>
<proteinExistence type="predicted"/>